<sequence length="202" mass="22358">MKALTARQQEVFDLIRDHISQTGMPPTRAEIAQRLGFRSPNAAEEHLKALARKGVIEIVSGASRGIRLLQEEEEGLPLVGRVAAGEPLLAQQHIEGHYQVDPSLFKPNADFLLRVSGMSMKDIGIMDGDLLAVHKTQDVRNGQVVVARIDDEVTVKRLKKQGNKVELLPENSEFKPIVVDLRQQSFTIEGLAVGVIRNGDWL</sequence>
<dbReference type="EC" id="3.4.21.88" evidence="1"/>
<dbReference type="EMBL" id="AE014075">
    <property type="protein sequence ID" value="AAN83440.1"/>
    <property type="molecule type" value="Genomic_DNA"/>
</dbReference>
<dbReference type="RefSeq" id="WP_000646078.1">
    <property type="nucleotide sequence ID" value="NZ_CP051263.1"/>
</dbReference>
<dbReference type="SMR" id="P0A7C3"/>
<dbReference type="STRING" id="199310.c5014"/>
<dbReference type="MEROPS" id="S24.001"/>
<dbReference type="GeneID" id="93777788"/>
<dbReference type="KEGG" id="ecc:c5014"/>
<dbReference type="eggNOG" id="COG1974">
    <property type="taxonomic scope" value="Bacteria"/>
</dbReference>
<dbReference type="HOGENOM" id="CLU_066192_45_3_6"/>
<dbReference type="BioCyc" id="ECOL199310:C5014-MONOMER"/>
<dbReference type="Proteomes" id="UP000001410">
    <property type="component" value="Chromosome"/>
</dbReference>
<dbReference type="GO" id="GO:0003677">
    <property type="term" value="F:DNA binding"/>
    <property type="evidence" value="ECO:0007669"/>
    <property type="project" value="UniProtKB-UniRule"/>
</dbReference>
<dbReference type="GO" id="GO:0004252">
    <property type="term" value="F:serine-type endopeptidase activity"/>
    <property type="evidence" value="ECO:0007669"/>
    <property type="project" value="UniProtKB-UniRule"/>
</dbReference>
<dbReference type="GO" id="GO:0006281">
    <property type="term" value="P:DNA repair"/>
    <property type="evidence" value="ECO:0007669"/>
    <property type="project" value="UniProtKB-UniRule"/>
</dbReference>
<dbReference type="GO" id="GO:0006260">
    <property type="term" value="P:DNA replication"/>
    <property type="evidence" value="ECO:0007669"/>
    <property type="project" value="UniProtKB-UniRule"/>
</dbReference>
<dbReference type="GO" id="GO:0045892">
    <property type="term" value="P:negative regulation of DNA-templated transcription"/>
    <property type="evidence" value="ECO:0007669"/>
    <property type="project" value="UniProtKB-UniRule"/>
</dbReference>
<dbReference type="GO" id="GO:0006508">
    <property type="term" value="P:proteolysis"/>
    <property type="evidence" value="ECO:0007669"/>
    <property type="project" value="InterPro"/>
</dbReference>
<dbReference type="GO" id="GO:0009432">
    <property type="term" value="P:SOS response"/>
    <property type="evidence" value="ECO:0007669"/>
    <property type="project" value="UniProtKB-UniRule"/>
</dbReference>
<dbReference type="CDD" id="cd06529">
    <property type="entry name" value="S24_LexA-like"/>
    <property type="match status" value="1"/>
</dbReference>
<dbReference type="FunFam" id="1.10.10.10:FF:000009">
    <property type="entry name" value="LexA repressor"/>
    <property type="match status" value="1"/>
</dbReference>
<dbReference type="FunFam" id="2.10.109.10:FF:000001">
    <property type="entry name" value="LexA repressor"/>
    <property type="match status" value="1"/>
</dbReference>
<dbReference type="Gene3D" id="2.10.109.10">
    <property type="entry name" value="Umud Fragment, subunit A"/>
    <property type="match status" value="1"/>
</dbReference>
<dbReference type="Gene3D" id="1.10.10.10">
    <property type="entry name" value="Winged helix-like DNA-binding domain superfamily/Winged helix DNA-binding domain"/>
    <property type="match status" value="1"/>
</dbReference>
<dbReference type="HAMAP" id="MF_00015">
    <property type="entry name" value="LexA"/>
    <property type="match status" value="1"/>
</dbReference>
<dbReference type="InterPro" id="IPR006200">
    <property type="entry name" value="LexA"/>
</dbReference>
<dbReference type="InterPro" id="IPR039418">
    <property type="entry name" value="LexA-like"/>
</dbReference>
<dbReference type="InterPro" id="IPR036286">
    <property type="entry name" value="LexA/Signal_pep-like_sf"/>
</dbReference>
<dbReference type="InterPro" id="IPR006199">
    <property type="entry name" value="LexA_DNA-bd_dom"/>
</dbReference>
<dbReference type="InterPro" id="IPR050077">
    <property type="entry name" value="LexA_repressor"/>
</dbReference>
<dbReference type="InterPro" id="IPR006197">
    <property type="entry name" value="Peptidase_S24_LexA"/>
</dbReference>
<dbReference type="InterPro" id="IPR015927">
    <property type="entry name" value="Peptidase_S24_S26A/B/C"/>
</dbReference>
<dbReference type="InterPro" id="IPR036388">
    <property type="entry name" value="WH-like_DNA-bd_sf"/>
</dbReference>
<dbReference type="InterPro" id="IPR036390">
    <property type="entry name" value="WH_DNA-bd_sf"/>
</dbReference>
<dbReference type="NCBIfam" id="TIGR00498">
    <property type="entry name" value="lexA"/>
    <property type="match status" value="1"/>
</dbReference>
<dbReference type="PANTHER" id="PTHR33516">
    <property type="entry name" value="LEXA REPRESSOR"/>
    <property type="match status" value="1"/>
</dbReference>
<dbReference type="PANTHER" id="PTHR33516:SF2">
    <property type="entry name" value="LEXA REPRESSOR-RELATED"/>
    <property type="match status" value="1"/>
</dbReference>
<dbReference type="Pfam" id="PF01726">
    <property type="entry name" value="LexA_DNA_bind"/>
    <property type="match status" value="1"/>
</dbReference>
<dbReference type="Pfam" id="PF00717">
    <property type="entry name" value="Peptidase_S24"/>
    <property type="match status" value="1"/>
</dbReference>
<dbReference type="PRINTS" id="PR00726">
    <property type="entry name" value="LEXASERPTASE"/>
</dbReference>
<dbReference type="SUPFAM" id="SSF51306">
    <property type="entry name" value="LexA/Signal peptidase"/>
    <property type="match status" value="1"/>
</dbReference>
<dbReference type="SUPFAM" id="SSF46785">
    <property type="entry name" value="Winged helix' DNA-binding domain"/>
    <property type="match status" value="1"/>
</dbReference>
<name>LEXA_ECOL6</name>
<reference key="1">
    <citation type="journal article" date="2002" name="Proc. Natl. Acad. Sci. U.S.A.">
        <title>Extensive mosaic structure revealed by the complete genome sequence of uropathogenic Escherichia coli.</title>
        <authorList>
            <person name="Welch R.A."/>
            <person name="Burland V."/>
            <person name="Plunkett G. III"/>
            <person name="Redford P."/>
            <person name="Roesch P."/>
            <person name="Rasko D."/>
            <person name="Buckles E.L."/>
            <person name="Liou S.-R."/>
            <person name="Boutin A."/>
            <person name="Hackett J."/>
            <person name="Stroud D."/>
            <person name="Mayhew G.F."/>
            <person name="Rose D.J."/>
            <person name="Zhou S."/>
            <person name="Schwartz D.C."/>
            <person name="Perna N.T."/>
            <person name="Mobley H.L.T."/>
            <person name="Donnenberg M.S."/>
            <person name="Blattner F.R."/>
        </authorList>
    </citation>
    <scope>NUCLEOTIDE SEQUENCE [LARGE SCALE GENOMIC DNA]</scope>
    <source>
        <strain>CFT073 / ATCC 700928 / UPEC</strain>
    </source>
</reference>
<proteinExistence type="inferred from homology"/>
<feature type="chain" id="PRO_0000170033" description="LexA repressor">
    <location>
        <begin position="1"/>
        <end position="202"/>
    </location>
</feature>
<feature type="DNA-binding region" description="H-T-H motif" evidence="1">
    <location>
        <begin position="28"/>
        <end position="48"/>
    </location>
</feature>
<feature type="active site" description="For autocatalytic cleavage activity" evidence="1">
    <location>
        <position position="119"/>
    </location>
</feature>
<feature type="active site" description="For autocatalytic cleavage activity" evidence="1">
    <location>
        <position position="156"/>
    </location>
</feature>
<feature type="site" description="Cleavage; by autolysis" evidence="1">
    <location>
        <begin position="84"/>
        <end position="85"/>
    </location>
</feature>
<gene>
    <name evidence="1" type="primary">lexA</name>
    <name type="ordered locus">c5014</name>
</gene>
<organism>
    <name type="scientific">Escherichia coli O6:H1 (strain CFT073 / ATCC 700928 / UPEC)</name>
    <dbReference type="NCBI Taxonomy" id="199310"/>
    <lineage>
        <taxon>Bacteria</taxon>
        <taxon>Pseudomonadati</taxon>
        <taxon>Pseudomonadota</taxon>
        <taxon>Gammaproteobacteria</taxon>
        <taxon>Enterobacterales</taxon>
        <taxon>Enterobacteriaceae</taxon>
        <taxon>Escherichia</taxon>
    </lineage>
</organism>
<keyword id="KW-0068">Autocatalytic cleavage</keyword>
<keyword id="KW-0227">DNA damage</keyword>
<keyword id="KW-0234">DNA repair</keyword>
<keyword id="KW-0235">DNA replication</keyword>
<keyword id="KW-0238">DNA-binding</keyword>
<keyword id="KW-0378">Hydrolase</keyword>
<keyword id="KW-1185">Reference proteome</keyword>
<keyword id="KW-0678">Repressor</keyword>
<keyword id="KW-0742">SOS response</keyword>
<keyword id="KW-0804">Transcription</keyword>
<keyword id="KW-0805">Transcription regulation</keyword>
<comment type="function">
    <text evidence="1">Represses a number of genes involved in the response to DNA damage (SOS response), including recA and lexA. Binds to the 16 bp palindromic sequence 5'-CTGTATATATATACAG-3'. In the presence of single-stranded DNA, RecA interacts with LexA causing an autocatalytic cleavage which disrupts the DNA-binding part of LexA, leading to derepression of the SOS regulon and eventually DNA repair.</text>
</comment>
<comment type="catalytic activity">
    <reaction evidence="1">
        <text>Hydrolysis of Ala-|-Gly bond in repressor LexA.</text>
        <dbReference type="EC" id="3.4.21.88"/>
    </reaction>
</comment>
<comment type="subunit">
    <text evidence="1">Homodimer.</text>
</comment>
<comment type="similarity">
    <text evidence="1">Belongs to the peptidase S24 family.</text>
</comment>
<evidence type="ECO:0000255" key="1">
    <source>
        <dbReference type="HAMAP-Rule" id="MF_00015"/>
    </source>
</evidence>
<accession>P0A7C3</accession>
<accession>P03033</accession>
<protein>
    <recommendedName>
        <fullName evidence="1">LexA repressor</fullName>
        <ecNumber evidence="1">3.4.21.88</ecNumber>
    </recommendedName>
</protein>